<protein>
    <recommendedName>
        <fullName evidence="1">Matrix protein 1</fullName>
        <shortName evidence="1">M1</shortName>
    </recommendedName>
</protein>
<feature type="chain" id="PRO_0000311608" description="Matrix protein 1">
    <location>
        <begin position="1"/>
        <end position="252"/>
    </location>
</feature>
<feature type="region of interest" description="Membrane-binding" evidence="1">
    <location>
        <begin position="1"/>
        <end position="164"/>
    </location>
</feature>
<feature type="region of interest" description="RNP-binding" evidence="1">
    <location>
        <begin position="165"/>
        <end position="252"/>
    </location>
</feature>
<feature type="short sequence motif" description="Nuclear localization signal" evidence="1">
    <location>
        <begin position="101"/>
        <end position="105"/>
    </location>
</feature>
<reference key="1">
    <citation type="journal article" date="2002" name="Proc. Natl. Acad. Sci. U.S.A.">
        <title>Emergence of multiple genotypes of H5N1 avian influenza viruses in Hong Kong SAR.</title>
        <authorList>
            <person name="Guan Y."/>
            <person name="Peiris J.S.M."/>
            <person name="Lipatov A.S."/>
            <person name="Ellis T.M."/>
            <person name="Dyrting K.C."/>
            <person name="Krauss S."/>
            <person name="Zhang L.J."/>
            <person name="Webster R.G."/>
            <person name="Shortridge K.F."/>
        </authorList>
    </citation>
    <scope>NUCLEOTIDE SEQUENCE [GENOMIC RNA]</scope>
</reference>
<name>M1_I01A1</name>
<dbReference type="EMBL" id="AF509041">
    <property type="protein sequence ID" value="AAO52884.1"/>
    <property type="molecule type" value="Genomic_DNA"/>
</dbReference>
<dbReference type="SMR" id="Q80A06"/>
<dbReference type="GO" id="GO:0042025">
    <property type="term" value="C:host cell nucleus"/>
    <property type="evidence" value="ECO:0007669"/>
    <property type="project" value="UniProtKB-SubCell"/>
</dbReference>
<dbReference type="GO" id="GO:0016020">
    <property type="term" value="C:membrane"/>
    <property type="evidence" value="ECO:0007669"/>
    <property type="project" value="UniProtKB-KW"/>
</dbReference>
<dbReference type="GO" id="GO:0055036">
    <property type="term" value="C:virion membrane"/>
    <property type="evidence" value="ECO:0007669"/>
    <property type="project" value="UniProtKB-SubCell"/>
</dbReference>
<dbReference type="GO" id="GO:0003723">
    <property type="term" value="F:RNA binding"/>
    <property type="evidence" value="ECO:0007669"/>
    <property type="project" value="UniProtKB-UniRule"/>
</dbReference>
<dbReference type="GO" id="GO:0039660">
    <property type="term" value="F:structural constituent of virion"/>
    <property type="evidence" value="ECO:0007669"/>
    <property type="project" value="UniProtKB-UniRule"/>
</dbReference>
<dbReference type="GO" id="GO:0046761">
    <property type="term" value="P:viral budding from plasma membrane"/>
    <property type="evidence" value="ECO:0007669"/>
    <property type="project" value="UniProtKB-UniRule"/>
</dbReference>
<dbReference type="FunFam" id="1.10.10.180:FF:000001">
    <property type="entry name" value="Matrix protein 1"/>
    <property type="match status" value="1"/>
</dbReference>
<dbReference type="FunFam" id="1.20.91.10:FF:000001">
    <property type="entry name" value="Matrix protein 1"/>
    <property type="match status" value="1"/>
</dbReference>
<dbReference type="Gene3D" id="1.10.10.180">
    <property type="match status" value="1"/>
</dbReference>
<dbReference type="Gene3D" id="1.20.91.10">
    <property type="match status" value="1"/>
</dbReference>
<dbReference type="HAMAP" id="MF_04068">
    <property type="entry name" value="INFV_M1"/>
    <property type="match status" value="1"/>
</dbReference>
<dbReference type="InterPro" id="IPR036039">
    <property type="entry name" value="Flu_matrix_M1"/>
</dbReference>
<dbReference type="InterPro" id="IPR013188">
    <property type="entry name" value="Flu_matrix_M1_C"/>
</dbReference>
<dbReference type="InterPro" id="IPR001561">
    <property type="entry name" value="Flu_matrix_M1_N"/>
</dbReference>
<dbReference type="InterPro" id="IPR015423">
    <property type="entry name" value="Flu_matrix_M1_N_sub1"/>
</dbReference>
<dbReference type="InterPro" id="IPR015799">
    <property type="entry name" value="Flu_matrix_M1_N_sub2"/>
</dbReference>
<dbReference type="InterPro" id="IPR037533">
    <property type="entry name" value="INFV_M1"/>
</dbReference>
<dbReference type="Pfam" id="PF00598">
    <property type="entry name" value="Flu_M1"/>
    <property type="match status" value="1"/>
</dbReference>
<dbReference type="Pfam" id="PF08289">
    <property type="entry name" value="Flu_M1_C"/>
    <property type="match status" value="1"/>
</dbReference>
<dbReference type="SMART" id="SM00759">
    <property type="entry name" value="Flu_M1_C"/>
    <property type="match status" value="1"/>
</dbReference>
<dbReference type="SUPFAM" id="SSF48145">
    <property type="entry name" value="Influenza virus matrix protein M1"/>
    <property type="match status" value="1"/>
</dbReference>
<proteinExistence type="inferred from homology"/>
<accession>Q80A06</accession>
<evidence type="ECO:0000255" key="1">
    <source>
        <dbReference type="HAMAP-Rule" id="MF_04068"/>
    </source>
</evidence>
<organismHost>
    <name type="scientific">Aves</name>
    <dbReference type="NCBI Taxonomy" id="8782"/>
</organismHost>
<organismHost>
    <name type="scientific">Felis catus</name>
    <name type="common">Cat</name>
    <name type="synonym">Felis silvestris catus</name>
    <dbReference type="NCBI Taxonomy" id="9685"/>
</organismHost>
<organismHost>
    <name type="scientific">Homo sapiens</name>
    <name type="common">Human</name>
    <dbReference type="NCBI Taxonomy" id="9606"/>
</organismHost>
<organismHost>
    <name type="scientific">Panthera pardus</name>
    <name type="common">Leopard</name>
    <name type="synonym">Felis pardus</name>
    <dbReference type="NCBI Taxonomy" id="9691"/>
</organismHost>
<organismHost>
    <name type="scientific">Panthera tigris</name>
    <name type="common">Tiger</name>
    <dbReference type="NCBI Taxonomy" id="9694"/>
</organismHost>
<organismHost>
    <name type="scientific">Sus scrofa</name>
    <name type="common">Pig</name>
    <dbReference type="NCBI Taxonomy" id="9823"/>
</organismHost>
<gene>
    <name evidence="1" type="primary">M</name>
</gene>
<comment type="function">
    <text evidence="1">Plays critical roles in virus replication, from virus entry and uncoating to assembly and budding of the virus particle. M1 binding to ribonucleocapsids (RNPs) in nucleus seems to inhibit viral transcription. Interaction of viral NEP with M1-RNP is thought to promote nuclear export of the complex, which is targeted to the virion assembly site at the apical plasma membrane in polarized epithelial cells. Interactions with NA and HA may bring M1, a non-raft-associated protein, into lipid rafts. Forms a continuous shell on the inner side of the lipid bilayer in virion, where it binds the RNP. During virus entry into cell, the M2 ion channel acidifies the internal virion core, inducing M1 dissociation from the RNP. M1-free RNPs are transported to the nucleus, where viral transcription and replication can take place.</text>
</comment>
<comment type="function">
    <text evidence="1">Determines the virion's shape: spherical or filamentous. Clinical isolates of influenza are characterized by the presence of significant proportion of filamentous virions, whereas after multiple passage on eggs or cell culture, virions have only spherical morphology. Filamentous virions are thought to be important to infect neighboring cells, and spherical virions more suited to spread through aerosol between hosts organisms.</text>
</comment>
<comment type="subunit">
    <text evidence="1">Homodimer and homomultimer. Interacts with NEP. Binds ribonucleocapsid by both interacting with genomic RNA and NP protein. May interact with HA and NA. Cannot bind NP without genomic RNA.</text>
</comment>
<comment type="subcellular location">
    <subcellularLocation>
        <location evidence="1">Virion membrane</location>
        <topology evidence="1">Peripheral membrane protein</topology>
        <orientation evidence="1">Cytoplasmic side</orientation>
    </subcellularLocation>
    <subcellularLocation>
        <location evidence="1">Host nucleus</location>
    </subcellularLocation>
</comment>
<comment type="alternative products">
    <event type="alternative splicing"/>
    <isoform>
        <id>Q80A06-1</id>
        <name>M1</name>
        <sequence type="displayed"/>
    </isoform>
    <isoform>
        <id>P0C5T1-1</id>
        <name>M2</name>
        <sequence type="external"/>
    </isoform>
    <text>Only the first 9 residues are shared by the 2 isoforms.</text>
</comment>
<comment type="miscellaneous">
    <text evidence="1">Most abundant protein in virion. When expressed alone can form virus-like particles in transfected cells.</text>
</comment>
<comment type="similarity">
    <text evidence="1">Belongs to the influenza viruses Matrix protein M1 family.</text>
</comment>
<organism>
    <name type="scientific">Influenza A virus (strain A/Chicken/Hong Kong/YU562/2001 H5N1 genotype B)</name>
    <dbReference type="NCBI Taxonomy" id="196426"/>
    <lineage>
        <taxon>Viruses</taxon>
        <taxon>Riboviria</taxon>
        <taxon>Orthornavirae</taxon>
        <taxon>Negarnaviricota</taxon>
        <taxon>Polyploviricotina</taxon>
        <taxon>Insthoviricetes</taxon>
        <taxon>Articulavirales</taxon>
        <taxon>Orthomyxoviridae</taxon>
        <taxon>Alphainfluenzavirus</taxon>
        <taxon>Alphainfluenzavirus influenzae</taxon>
        <taxon>Influenza A virus</taxon>
    </lineage>
</organism>
<keyword id="KW-0025">Alternative splicing</keyword>
<keyword id="KW-1048">Host nucleus</keyword>
<keyword id="KW-0472">Membrane</keyword>
<keyword id="KW-0694">RNA-binding</keyword>
<keyword id="KW-0468">Viral matrix protein</keyword>
<keyword id="KW-0946">Virion</keyword>
<sequence length="252" mass="27931">MSLLTEVETYVLSIIPSGPLKAEIAQRLEDVFAGKNTDLEALMEWLKTRPILSPLTKGILGFVFTLTVPSERGLQRRRFVQNALNGNGDPNNMDRAVKLYKKLKREITFHGAKEVALSYSTGALASCMGLIYNRMGTVTTEVAFGLLCATCEQIADSQHRSHRQMATTTNPLIRHENRMVLASTTAKAMEQVAGSSEQAAEAMEVANQARQMVQAMRTIGTHPNSSAGLRDNLLENLQAYQKRMGVQMQRFK</sequence>